<comment type="function">
    <text evidence="1">One of the proteins required for the normal export of preproteins out of the cell cytoplasm. It is a molecular chaperone that binds to a subset of precursor proteins, maintaining them in a translocation-competent state. It also specifically binds to its receptor SecA.</text>
</comment>
<comment type="subunit">
    <text evidence="1">Homotetramer, a dimer of dimers. One homotetramer interacts with 1 SecA dimer.</text>
</comment>
<comment type="subcellular location">
    <subcellularLocation>
        <location evidence="1">Cytoplasm</location>
    </subcellularLocation>
</comment>
<comment type="similarity">
    <text evidence="1">Belongs to the SecB family.</text>
</comment>
<dbReference type="EMBL" id="AE003852">
    <property type="protein sequence ID" value="AAF95794.1"/>
    <property type="molecule type" value="Genomic_DNA"/>
</dbReference>
<dbReference type="PIR" id="C82050">
    <property type="entry name" value="C82050"/>
</dbReference>
<dbReference type="RefSeq" id="NP_232281.1">
    <property type="nucleotide sequence ID" value="NC_002505.1"/>
</dbReference>
<dbReference type="RefSeq" id="WP_000796512.1">
    <property type="nucleotide sequence ID" value="NZ_LT906614.1"/>
</dbReference>
<dbReference type="SMR" id="Q9KNS8"/>
<dbReference type="STRING" id="243277.VC_2653"/>
<dbReference type="DNASU" id="2615670"/>
<dbReference type="EnsemblBacteria" id="AAF95794">
    <property type="protein sequence ID" value="AAF95794"/>
    <property type="gene ID" value="VC_2653"/>
</dbReference>
<dbReference type="GeneID" id="69718748"/>
<dbReference type="KEGG" id="vch:VC_2653"/>
<dbReference type="PATRIC" id="fig|243277.26.peg.2529"/>
<dbReference type="eggNOG" id="COG1952">
    <property type="taxonomic scope" value="Bacteria"/>
</dbReference>
<dbReference type="HOGENOM" id="CLU_111574_1_0_6"/>
<dbReference type="Proteomes" id="UP000000584">
    <property type="component" value="Chromosome 1"/>
</dbReference>
<dbReference type="GO" id="GO:0005737">
    <property type="term" value="C:cytoplasm"/>
    <property type="evidence" value="ECO:0007669"/>
    <property type="project" value="UniProtKB-SubCell"/>
</dbReference>
<dbReference type="GO" id="GO:0051082">
    <property type="term" value="F:unfolded protein binding"/>
    <property type="evidence" value="ECO:0007669"/>
    <property type="project" value="InterPro"/>
</dbReference>
<dbReference type="GO" id="GO:0006457">
    <property type="term" value="P:protein folding"/>
    <property type="evidence" value="ECO:0007669"/>
    <property type="project" value="UniProtKB-UniRule"/>
</dbReference>
<dbReference type="GO" id="GO:0051262">
    <property type="term" value="P:protein tetramerization"/>
    <property type="evidence" value="ECO:0007669"/>
    <property type="project" value="InterPro"/>
</dbReference>
<dbReference type="GO" id="GO:0015031">
    <property type="term" value="P:protein transport"/>
    <property type="evidence" value="ECO:0007669"/>
    <property type="project" value="UniProtKB-UniRule"/>
</dbReference>
<dbReference type="Gene3D" id="3.10.420.10">
    <property type="entry name" value="SecB-like"/>
    <property type="match status" value="1"/>
</dbReference>
<dbReference type="HAMAP" id="MF_00821">
    <property type="entry name" value="SecB"/>
    <property type="match status" value="1"/>
</dbReference>
<dbReference type="InterPro" id="IPR003708">
    <property type="entry name" value="SecB"/>
</dbReference>
<dbReference type="InterPro" id="IPR035958">
    <property type="entry name" value="SecB-like_sf"/>
</dbReference>
<dbReference type="NCBIfam" id="NF004393">
    <property type="entry name" value="PRK05751.1-4"/>
    <property type="match status" value="1"/>
</dbReference>
<dbReference type="NCBIfam" id="TIGR00809">
    <property type="entry name" value="secB"/>
    <property type="match status" value="1"/>
</dbReference>
<dbReference type="PANTHER" id="PTHR36918">
    <property type="match status" value="1"/>
</dbReference>
<dbReference type="PANTHER" id="PTHR36918:SF1">
    <property type="entry name" value="PROTEIN-EXPORT PROTEIN SECB"/>
    <property type="match status" value="1"/>
</dbReference>
<dbReference type="Pfam" id="PF02556">
    <property type="entry name" value="SecB"/>
    <property type="match status" value="1"/>
</dbReference>
<dbReference type="PRINTS" id="PR01594">
    <property type="entry name" value="SECBCHAPRONE"/>
</dbReference>
<dbReference type="SUPFAM" id="SSF54611">
    <property type="entry name" value="SecB-like"/>
    <property type="match status" value="1"/>
</dbReference>
<sequence>MAEAAQAPQQQFAIQRIYLKDVSFEAPSSPVMFQKEWNPDVKLDLDTQSRELGQGVYEVVLRLTVTVKNAEETAFLCEVQQAGIFSAEQMEAGQLAHCLGAFCPNILFPYARETISSLVVKGTFPQLNLAPVNFDALFMNYLQQQAQEGATANA</sequence>
<proteinExistence type="inferred from homology"/>
<name>SECB_VIBCH</name>
<keyword id="KW-0143">Chaperone</keyword>
<keyword id="KW-0963">Cytoplasm</keyword>
<keyword id="KW-0653">Protein transport</keyword>
<keyword id="KW-1185">Reference proteome</keyword>
<keyword id="KW-0811">Translocation</keyword>
<keyword id="KW-0813">Transport</keyword>
<reference key="1">
    <citation type="journal article" date="2000" name="Nature">
        <title>DNA sequence of both chromosomes of the cholera pathogen Vibrio cholerae.</title>
        <authorList>
            <person name="Heidelberg J.F."/>
            <person name="Eisen J.A."/>
            <person name="Nelson W.C."/>
            <person name="Clayton R.A."/>
            <person name="Gwinn M.L."/>
            <person name="Dodson R.J."/>
            <person name="Haft D.H."/>
            <person name="Hickey E.K."/>
            <person name="Peterson J.D."/>
            <person name="Umayam L.A."/>
            <person name="Gill S.R."/>
            <person name="Nelson K.E."/>
            <person name="Read T.D."/>
            <person name="Tettelin H."/>
            <person name="Richardson D.L."/>
            <person name="Ermolaeva M.D."/>
            <person name="Vamathevan J.J."/>
            <person name="Bass S."/>
            <person name="Qin H."/>
            <person name="Dragoi I."/>
            <person name="Sellers P."/>
            <person name="McDonald L.A."/>
            <person name="Utterback T.R."/>
            <person name="Fleischmann R.D."/>
            <person name="Nierman W.C."/>
            <person name="White O."/>
            <person name="Salzberg S.L."/>
            <person name="Smith H.O."/>
            <person name="Colwell R.R."/>
            <person name="Mekalanos J.J."/>
            <person name="Venter J.C."/>
            <person name="Fraser C.M."/>
        </authorList>
    </citation>
    <scope>NUCLEOTIDE SEQUENCE [LARGE SCALE GENOMIC DNA]</scope>
    <source>
        <strain>ATCC 39315 / El Tor Inaba N16961</strain>
    </source>
</reference>
<protein>
    <recommendedName>
        <fullName evidence="1">Protein-export protein SecB</fullName>
    </recommendedName>
</protein>
<evidence type="ECO:0000255" key="1">
    <source>
        <dbReference type="HAMAP-Rule" id="MF_00821"/>
    </source>
</evidence>
<feature type="chain" id="PRO_0000055420" description="Protein-export protein SecB">
    <location>
        <begin position="1"/>
        <end position="154"/>
    </location>
</feature>
<gene>
    <name evidence="1" type="primary">secB</name>
    <name type="ordered locus">VC_2653</name>
</gene>
<accession>Q9KNS8</accession>
<organism>
    <name type="scientific">Vibrio cholerae serotype O1 (strain ATCC 39315 / El Tor Inaba N16961)</name>
    <dbReference type="NCBI Taxonomy" id="243277"/>
    <lineage>
        <taxon>Bacteria</taxon>
        <taxon>Pseudomonadati</taxon>
        <taxon>Pseudomonadota</taxon>
        <taxon>Gammaproteobacteria</taxon>
        <taxon>Vibrionales</taxon>
        <taxon>Vibrionaceae</taxon>
        <taxon>Vibrio</taxon>
    </lineage>
</organism>